<dbReference type="EC" id="3.1.1.4"/>
<dbReference type="SMR" id="P0CAS5"/>
<dbReference type="GO" id="GO:0005576">
    <property type="term" value="C:extracellular region"/>
    <property type="evidence" value="ECO:0007669"/>
    <property type="project" value="UniProtKB-SubCell"/>
</dbReference>
<dbReference type="GO" id="GO:0005509">
    <property type="term" value="F:calcium ion binding"/>
    <property type="evidence" value="ECO:0007669"/>
    <property type="project" value="InterPro"/>
</dbReference>
<dbReference type="GO" id="GO:0047498">
    <property type="term" value="F:calcium-dependent phospholipase A2 activity"/>
    <property type="evidence" value="ECO:0007669"/>
    <property type="project" value="TreeGrafter"/>
</dbReference>
<dbReference type="GO" id="GO:0005543">
    <property type="term" value="F:phospholipid binding"/>
    <property type="evidence" value="ECO:0007669"/>
    <property type="project" value="TreeGrafter"/>
</dbReference>
<dbReference type="GO" id="GO:0090729">
    <property type="term" value="F:toxin activity"/>
    <property type="evidence" value="ECO:0007669"/>
    <property type="project" value="UniProtKB-KW"/>
</dbReference>
<dbReference type="GO" id="GO:0050482">
    <property type="term" value="P:arachidonate secretion"/>
    <property type="evidence" value="ECO:0007669"/>
    <property type="project" value="InterPro"/>
</dbReference>
<dbReference type="GO" id="GO:0042742">
    <property type="term" value="P:defense response to bacterium"/>
    <property type="evidence" value="ECO:0007669"/>
    <property type="project" value="UniProtKB-KW"/>
</dbReference>
<dbReference type="GO" id="GO:0016042">
    <property type="term" value="P:lipid catabolic process"/>
    <property type="evidence" value="ECO:0007669"/>
    <property type="project" value="UniProtKB-KW"/>
</dbReference>
<dbReference type="GO" id="GO:0042130">
    <property type="term" value="P:negative regulation of T cell proliferation"/>
    <property type="evidence" value="ECO:0007669"/>
    <property type="project" value="TreeGrafter"/>
</dbReference>
<dbReference type="GO" id="GO:0006644">
    <property type="term" value="P:phospholipid metabolic process"/>
    <property type="evidence" value="ECO:0007669"/>
    <property type="project" value="InterPro"/>
</dbReference>
<dbReference type="CDD" id="cd00125">
    <property type="entry name" value="PLA2c"/>
    <property type="match status" value="1"/>
</dbReference>
<dbReference type="FunFam" id="1.20.90.10:FF:000001">
    <property type="entry name" value="Basic phospholipase A2 homolog"/>
    <property type="match status" value="1"/>
</dbReference>
<dbReference type="Gene3D" id="1.20.90.10">
    <property type="entry name" value="Phospholipase A2 domain"/>
    <property type="match status" value="1"/>
</dbReference>
<dbReference type="InterPro" id="IPR001211">
    <property type="entry name" value="PLipase_A2"/>
</dbReference>
<dbReference type="InterPro" id="IPR033112">
    <property type="entry name" value="PLipase_A2_Asp_AS"/>
</dbReference>
<dbReference type="InterPro" id="IPR016090">
    <property type="entry name" value="PLipase_A2_dom"/>
</dbReference>
<dbReference type="InterPro" id="IPR036444">
    <property type="entry name" value="PLipase_A2_dom_sf"/>
</dbReference>
<dbReference type="InterPro" id="IPR033113">
    <property type="entry name" value="PLipase_A2_His_AS"/>
</dbReference>
<dbReference type="PANTHER" id="PTHR11716">
    <property type="entry name" value="PHOSPHOLIPASE A2 FAMILY MEMBER"/>
    <property type="match status" value="1"/>
</dbReference>
<dbReference type="PANTHER" id="PTHR11716:SF9">
    <property type="entry name" value="PHOSPHOLIPASE A2, MEMBRANE ASSOCIATED"/>
    <property type="match status" value="1"/>
</dbReference>
<dbReference type="Pfam" id="PF00068">
    <property type="entry name" value="Phospholip_A2_1"/>
    <property type="match status" value="1"/>
</dbReference>
<dbReference type="PRINTS" id="PR00389">
    <property type="entry name" value="PHPHLIPASEA2"/>
</dbReference>
<dbReference type="SMART" id="SM00085">
    <property type="entry name" value="PA2c"/>
    <property type="match status" value="1"/>
</dbReference>
<dbReference type="SUPFAM" id="SSF48619">
    <property type="entry name" value="Phospholipase A2, PLA2"/>
    <property type="match status" value="1"/>
</dbReference>
<dbReference type="PROSITE" id="PS00119">
    <property type="entry name" value="PA2_ASP"/>
    <property type="match status" value="1"/>
</dbReference>
<dbReference type="PROSITE" id="PS00118">
    <property type="entry name" value="PA2_HIS"/>
    <property type="match status" value="1"/>
</dbReference>
<reference key="1">
    <citation type="journal article" date="2003" name="Toxicon">
        <title>Structural, enzymatic and biological properties of new PLA(2) isoform from Crotalus durissus terrificus venom.</title>
        <authorList>
            <person name="Toyama M.H."/>
            <person name="de Oliveira D.G."/>
            <person name="Beriam L.O.S."/>
            <person name="Novello J.C."/>
            <person name="Rodrigues-Simioni L."/>
            <person name="Marangoni S."/>
        </authorList>
    </citation>
    <scope>PROTEIN SEQUENCE</scope>
    <scope>FUNCTION</scope>
    <scope>COFACTOR</scope>
    <scope>ACTIVITY REGULATION</scope>
    <scope>BIOPHYSICOCHEMICAL PROPERTIES</scope>
    <source>
        <tissue>Venom</tissue>
    </source>
</reference>
<organism>
    <name type="scientific">Crotalus durissus terrificus</name>
    <name type="common">South American rattlesnake</name>
    <dbReference type="NCBI Taxonomy" id="8732"/>
    <lineage>
        <taxon>Eukaryota</taxon>
        <taxon>Metazoa</taxon>
        <taxon>Chordata</taxon>
        <taxon>Craniata</taxon>
        <taxon>Vertebrata</taxon>
        <taxon>Euteleostomi</taxon>
        <taxon>Lepidosauria</taxon>
        <taxon>Squamata</taxon>
        <taxon>Bifurcata</taxon>
        <taxon>Unidentata</taxon>
        <taxon>Episquamata</taxon>
        <taxon>Toxicofera</taxon>
        <taxon>Serpentes</taxon>
        <taxon>Colubroidea</taxon>
        <taxon>Viperidae</taxon>
        <taxon>Crotalinae</taxon>
        <taxon>Crotalus</taxon>
    </lineage>
</organism>
<feature type="chain" id="PRO_0000376922" description="Basic phospholipase A2 F15">
    <location>
        <begin position="1"/>
        <end position="122"/>
    </location>
</feature>
<feature type="active site" evidence="1">
    <location>
        <position position="47"/>
    </location>
</feature>
<feature type="active site" evidence="1">
    <location>
        <position position="89"/>
    </location>
</feature>
<feature type="binding site" evidence="1">
    <location>
        <position position="27"/>
    </location>
    <ligand>
        <name>Ca(2+)</name>
        <dbReference type="ChEBI" id="CHEBI:29108"/>
    </ligand>
</feature>
<feature type="binding site" evidence="1">
    <location>
        <position position="29"/>
    </location>
    <ligand>
        <name>Ca(2+)</name>
        <dbReference type="ChEBI" id="CHEBI:29108"/>
    </ligand>
</feature>
<feature type="binding site" evidence="1">
    <location>
        <position position="31"/>
    </location>
    <ligand>
        <name>Ca(2+)</name>
        <dbReference type="ChEBI" id="CHEBI:29108"/>
    </ligand>
</feature>
<feature type="binding site" evidence="1">
    <location>
        <position position="48"/>
    </location>
    <ligand>
        <name>Ca(2+)</name>
        <dbReference type="ChEBI" id="CHEBI:29108"/>
    </ligand>
</feature>
<feature type="disulfide bond" evidence="1">
    <location>
        <begin position="26"/>
        <end position="115"/>
    </location>
</feature>
<feature type="disulfide bond" evidence="1">
    <location>
        <begin position="28"/>
        <end position="44"/>
    </location>
</feature>
<feature type="disulfide bond" evidence="1">
    <location>
        <begin position="43"/>
        <end position="95"/>
    </location>
</feature>
<feature type="disulfide bond" evidence="1">
    <location>
        <begin position="49"/>
        <end position="122"/>
    </location>
</feature>
<feature type="disulfide bond" evidence="1">
    <location>
        <begin position="50"/>
        <end position="88"/>
    </location>
</feature>
<feature type="disulfide bond" evidence="1">
    <location>
        <begin position="57"/>
        <end position="81"/>
    </location>
</feature>
<feature type="disulfide bond" evidence="1">
    <location>
        <begin position="75"/>
        <end position="86"/>
    </location>
</feature>
<protein>
    <recommendedName>
        <fullName>Basic phospholipase A2 F15</fullName>
        <shortName>svPLA2</shortName>
        <ecNumber>3.1.1.4</ecNumber>
    </recommendedName>
    <alternativeName>
        <fullName>CdtF15</fullName>
    </alternativeName>
    <alternativeName>
        <fullName>Phosphatidylcholine 2-acylhydrolase</fullName>
    </alternativeName>
</protein>
<evidence type="ECO:0000250" key="1">
    <source>
        <dbReference type="UniProtKB" id="P62022"/>
    </source>
</evidence>
<evidence type="ECO:0000255" key="2">
    <source>
        <dbReference type="PROSITE-ProRule" id="PRU10035"/>
    </source>
</evidence>
<evidence type="ECO:0000255" key="3">
    <source>
        <dbReference type="PROSITE-ProRule" id="PRU10036"/>
    </source>
</evidence>
<evidence type="ECO:0000269" key="4">
    <source>
    </source>
</evidence>
<evidence type="ECO:0000305" key="5"/>
<sequence>HLLQFNKMIKFETRKNAVPFYAFYGCYCGWGGQRRPKDATDRCCFVHDCCYGKLTKCNTKWDIYRYSLKSGYITCGKGTWCKEQICECDRVAAECLRRSLSTYKNEYMFYPKSRCRRPSETC</sequence>
<proteinExistence type="evidence at protein level"/>
<comment type="function">
    <text evidence="4">Snake venom phospholipase A2 (PLA2) that shows moderate neurotoxic activity in isolated mouse phrenic nerve diaphragm but shows high neurotoxic activity in a chick biventer cervis preparation. Also shows a high bactericidal effect against both Gram-negative and Gram-positive bacteria. PLA2 catalyzes the calcium-dependent hydrolysis of the 2-acyl groups in 3-sn-phosphoglycerides.</text>
</comment>
<comment type="catalytic activity">
    <reaction evidence="2 3">
        <text>a 1,2-diacyl-sn-glycero-3-phosphocholine + H2O = a 1-acyl-sn-glycero-3-phosphocholine + a fatty acid + H(+)</text>
        <dbReference type="Rhea" id="RHEA:15801"/>
        <dbReference type="ChEBI" id="CHEBI:15377"/>
        <dbReference type="ChEBI" id="CHEBI:15378"/>
        <dbReference type="ChEBI" id="CHEBI:28868"/>
        <dbReference type="ChEBI" id="CHEBI:57643"/>
        <dbReference type="ChEBI" id="CHEBI:58168"/>
        <dbReference type="EC" id="3.1.1.4"/>
    </reaction>
</comment>
<comment type="cofactor">
    <cofactor evidence="4">
        <name>Ca(2+)</name>
        <dbReference type="ChEBI" id="CHEBI:29108"/>
    </cofactor>
    <text evidence="4">Binds 1 Ca(2+) ion.</text>
</comment>
<comment type="activity regulation">
    <text evidence="4">Activated by heparin. Inhibited by its chaperone crotapotin.</text>
</comment>
<comment type="biophysicochemical properties">
    <kinetics>
        <KM evidence="4">38.5 mM for 4-nitro-3-(octanoyloxy)benzoic acid</KM>
        <Vmax evidence="4">8.5 nmol/min/mg enzyme</Vmax>
    </kinetics>
    <phDependence>
        <text evidence="4">Optimum pH is 8.5.</text>
    </phDependence>
    <temperatureDependence>
        <text evidence="4">Optimum temperature is 18 degrees Celsius.</text>
    </temperatureDependence>
</comment>
<comment type="subunit">
    <text>When this protein is associated with crotapotin (F5 or F7), it forms the crotoxin protein.</text>
</comment>
<comment type="subcellular location">
    <subcellularLocation>
        <location>Secreted</location>
    </subcellularLocation>
</comment>
<comment type="tissue specificity">
    <text>Expressed by the venom gland.</text>
</comment>
<comment type="similarity">
    <text evidence="5">Belongs to the phospholipase A2 family. Group II subfamily. D49 sub-subfamily.</text>
</comment>
<name>PA2BE_CRODU</name>
<keyword id="KW-0044">Antibiotic</keyword>
<keyword id="KW-0929">Antimicrobial</keyword>
<keyword id="KW-0106">Calcium</keyword>
<keyword id="KW-0903">Direct protein sequencing</keyword>
<keyword id="KW-1015">Disulfide bond</keyword>
<keyword id="KW-0378">Hydrolase</keyword>
<keyword id="KW-0442">Lipid degradation</keyword>
<keyword id="KW-0443">Lipid metabolism</keyword>
<keyword id="KW-0479">Metal-binding</keyword>
<keyword id="KW-0528">Neurotoxin</keyword>
<keyword id="KW-0964">Secreted</keyword>
<keyword id="KW-0800">Toxin</keyword>
<accession>P0CAS5</accession>